<gene>
    <name type="primary">ndhF</name>
</gene>
<comment type="function">
    <text evidence="1">NDH shuttles electrons from NAD(P)H:plastoquinone, via FMN and iron-sulfur (Fe-S) centers, to quinones in the photosynthetic chain and possibly in a chloroplast respiratory chain. The immediate electron acceptor for the enzyme in this species is believed to be plastoquinone. Couples the redox reaction to proton translocation, and thus conserves the redox energy in a proton gradient (By similarity).</text>
</comment>
<comment type="catalytic activity">
    <reaction>
        <text>a plastoquinone + NADH + (n+1) H(+)(in) = a plastoquinol + NAD(+) + n H(+)(out)</text>
        <dbReference type="Rhea" id="RHEA:42608"/>
        <dbReference type="Rhea" id="RHEA-COMP:9561"/>
        <dbReference type="Rhea" id="RHEA-COMP:9562"/>
        <dbReference type="ChEBI" id="CHEBI:15378"/>
        <dbReference type="ChEBI" id="CHEBI:17757"/>
        <dbReference type="ChEBI" id="CHEBI:57540"/>
        <dbReference type="ChEBI" id="CHEBI:57945"/>
        <dbReference type="ChEBI" id="CHEBI:62192"/>
    </reaction>
</comment>
<comment type="catalytic activity">
    <reaction>
        <text>a plastoquinone + NADPH + (n+1) H(+)(in) = a plastoquinol + NADP(+) + n H(+)(out)</text>
        <dbReference type="Rhea" id="RHEA:42612"/>
        <dbReference type="Rhea" id="RHEA-COMP:9561"/>
        <dbReference type="Rhea" id="RHEA-COMP:9562"/>
        <dbReference type="ChEBI" id="CHEBI:15378"/>
        <dbReference type="ChEBI" id="CHEBI:17757"/>
        <dbReference type="ChEBI" id="CHEBI:57783"/>
        <dbReference type="ChEBI" id="CHEBI:58349"/>
        <dbReference type="ChEBI" id="CHEBI:62192"/>
    </reaction>
</comment>
<comment type="subunit">
    <text evidence="1">NDH is composed of at least 16 different subunits, 5 of which are encoded in the nucleus.</text>
</comment>
<comment type="subcellular location">
    <subcellularLocation>
        <location evidence="1">Plastid</location>
        <location evidence="1">Chloroplast thylakoid membrane</location>
        <topology evidence="1">Multi-pass membrane protein</topology>
    </subcellularLocation>
</comment>
<comment type="similarity">
    <text evidence="3">Belongs to the complex I subunit 5 family.</text>
</comment>
<sequence>MEHTYQYSWIIPLVPLPVPMLIGVGLLFFPTATKNLRRMWAFISILLLSIVMIFSIDLSIEQIDRTSIYQSLRTWTITSDLSFEFGYFIDPLTSIMSILITTVGILVLIYSDNYMSHDQGYLRFFAYMSFFNASMLGLVTSSNFIQIYIFWELVGMCSYLLIGFWFTRPIAAGACQKAFVTNRVGDFGLLLGILGLYWLTGSFEFRDLFEILKNLIYNNEVNLLFVTLCAFLLFAGPVAKSAQFPLHVWLPDAMEGPTPISALIHAATMVAAGIFLVARLLPLFIVIPYAMNLISLIGIITVFLGATLALAQQDIKRGLAYSTMSQLGYMMLALGMGSYRAALFHLITHAYSKALLFLGSGSIIHSMEAIVGYFPDKSQNMVLMGGLRKHVPITKTAFLVGTLSLCGIPPLACFWSKDEILNDTWLYSPIFATIAFFTAGLTAFYMFRIYLLTFEGPFNFCLQNYSGKKRNSLYSISLWGKEEPKPIKNKFHLVALLTMNNNKRASFFAKKTHRIASTVTNMPFITIFPFGAAKTFCYPHESDNTILFVMLVLVLFPLFVGAIGIPLNQEVIESDILSKLLTPSINLLQQNSTHFVDWYEVVKNPTLSVSITYFGILLAYFLYKPFYSSLHNWNILNFFAKRGPKRILWDKILNFLYDWSYNRAYIDAFYTRSLTEGIRGLAELTHLFDRRVIDGITNGVGITSFFVGEGIKYLGGSRISFYLLLYLFSLLFFLIFLFFFFFK</sequence>
<geneLocation type="chloroplast"/>
<accession>Q09MC9</accession>
<dbReference type="EC" id="7.1.1.-"/>
<dbReference type="EMBL" id="DQ864733">
    <property type="protein sequence ID" value="ABI49068.1"/>
    <property type="molecule type" value="Genomic_DNA"/>
</dbReference>
<dbReference type="RefSeq" id="YP_740524.1">
    <property type="nucleotide sequence ID" value="NC_008334.1"/>
</dbReference>
<dbReference type="SMR" id="Q09MC9"/>
<dbReference type="GeneID" id="4271110"/>
<dbReference type="KEGG" id="cit:4271110"/>
<dbReference type="eggNOG" id="ENOG502SVEB">
    <property type="taxonomic scope" value="Eukaryota"/>
</dbReference>
<dbReference type="OrthoDB" id="870642at71240"/>
<dbReference type="GO" id="GO:0009535">
    <property type="term" value="C:chloroplast thylakoid membrane"/>
    <property type="evidence" value="ECO:0007669"/>
    <property type="project" value="UniProtKB-SubCell"/>
</dbReference>
<dbReference type="GO" id="GO:0008137">
    <property type="term" value="F:NADH dehydrogenase (ubiquinone) activity"/>
    <property type="evidence" value="ECO:0007669"/>
    <property type="project" value="InterPro"/>
</dbReference>
<dbReference type="GO" id="GO:0048038">
    <property type="term" value="F:quinone binding"/>
    <property type="evidence" value="ECO:0007669"/>
    <property type="project" value="UniProtKB-KW"/>
</dbReference>
<dbReference type="GO" id="GO:0042773">
    <property type="term" value="P:ATP synthesis coupled electron transport"/>
    <property type="evidence" value="ECO:0007669"/>
    <property type="project" value="InterPro"/>
</dbReference>
<dbReference type="Gene3D" id="1.20.5.2700">
    <property type="match status" value="1"/>
</dbReference>
<dbReference type="InterPro" id="IPR002128">
    <property type="entry name" value="NADH_UbQ_OxRdtase_chlpt_su5_C"/>
</dbReference>
<dbReference type="InterPro" id="IPR018393">
    <property type="entry name" value="NADHpl_OxRdtase_5_subgr"/>
</dbReference>
<dbReference type="InterPro" id="IPR001750">
    <property type="entry name" value="ND/Mrp_TM"/>
</dbReference>
<dbReference type="InterPro" id="IPR003945">
    <property type="entry name" value="NU5C-like"/>
</dbReference>
<dbReference type="InterPro" id="IPR001516">
    <property type="entry name" value="Proton_antipo_N"/>
</dbReference>
<dbReference type="NCBIfam" id="TIGR01974">
    <property type="entry name" value="NDH_I_L"/>
    <property type="match status" value="1"/>
</dbReference>
<dbReference type="NCBIfam" id="NF005141">
    <property type="entry name" value="PRK06590.1"/>
    <property type="match status" value="1"/>
</dbReference>
<dbReference type="PANTHER" id="PTHR42829">
    <property type="entry name" value="NADH-UBIQUINONE OXIDOREDUCTASE CHAIN 5"/>
    <property type="match status" value="1"/>
</dbReference>
<dbReference type="PANTHER" id="PTHR42829:SF2">
    <property type="entry name" value="NADH-UBIQUINONE OXIDOREDUCTASE CHAIN 5"/>
    <property type="match status" value="1"/>
</dbReference>
<dbReference type="Pfam" id="PF01010">
    <property type="entry name" value="Proton_antipo_C"/>
    <property type="match status" value="1"/>
</dbReference>
<dbReference type="Pfam" id="PF00361">
    <property type="entry name" value="Proton_antipo_M"/>
    <property type="match status" value="1"/>
</dbReference>
<dbReference type="Pfam" id="PF00662">
    <property type="entry name" value="Proton_antipo_N"/>
    <property type="match status" value="1"/>
</dbReference>
<dbReference type="PRINTS" id="PR01434">
    <property type="entry name" value="NADHDHGNASE5"/>
</dbReference>
<dbReference type="PRINTS" id="PR01435">
    <property type="entry name" value="NPOXDRDTASE5"/>
</dbReference>
<protein>
    <recommendedName>
        <fullName>NAD(P)H-quinone oxidoreductase subunit 5, chloroplastic</fullName>
        <ecNumber>7.1.1.-</ecNumber>
    </recommendedName>
    <alternativeName>
        <fullName>NAD(P)H dehydrogenase subunit 5</fullName>
    </alternativeName>
    <alternativeName>
        <fullName>NADH-plastoquinone oxidoreductase subunit 5</fullName>
    </alternativeName>
</protein>
<name>NU5C_CITSI</name>
<keyword id="KW-0150">Chloroplast</keyword>
<keyword id="KW-0472">Membrane</keyword>
<keyword id="KW-0520">NAD</keyword>
<keyword id="KW-0521">NADP</keyword>
<keyword id="KW-0934">Plastid</keyword>
<keyword id="KW-0618">Plastoquinone</keyword>
<keyword id="KW-0874">Quinone</keyword>
<keyword id="KW-0793">Thylakoid</keyword>
<keyword id="KW-1278">Translocase</keyword>
<keyword id="KW-0812">Transmembrane</keyword>
<keyword id="KW-1133">Transmembrane helix</keyword>
<keyword id="KW-0813">Transport</keyword>
<reference key="1">
    <citation type="journal article" date="2006" name="BMC Plant Biol.">
        <title>The complete chloroplast genome sequence of Citrus sinensis (L.) Osbeck var 'Ridge Pineapple': organization and phylogenetic relationships to other angiosperms.</title>
        <authorList>
            <person name="Bausher M.G."/>
            <person name="Singh N.D."/>
            <person name="Lee S.-B."/>
            <person name="Jansen R.K."/>
            <person name="Daniell H."/>
        </authorList>
    </citation>
    <scope>NUCLEOTIDE SEQUENCE [LARGE SCALE GENOMIC DNA]</scope>
    <source>
        <strain>cv. Osbeck var. Ridge Pineapple</strain>
    </source>
</reference>
<organism>
    <name type="scientific">Citrus sinensis</name>
    <name type="common">Sweet orange</name>
    <name type="synonym">Citrus aurantium var. sinensis</name>
    <dbReference type="NCBI Taxonomy" id="2711"/>
    <lineage>
        <taxon>Eukaryota</taxon>
        <taxon>Viridiplantae</taxon>
        <taxon>Streptophyta</taxon>
        <taxon>Embryophyta</taxon>
        <taxon>Tracheophyta</taxon>
        <taxon>Spermatophyta</taxon>
        <taxon>Magnoliopsida</taxon>
        <taxon>eudicotyledons</taxon>
        <taxon>Gunneridae</taxon>
        <taxon>Pentapetalae</taxon>
        <taxon>rosids</taxon>
        <taxon>malvids</taxon>
        <taxon>Sapindales</taxon>
        <taxon>Rutaceae</taxon>
        <taxon>Aurantioideae</taxon>
        <taxon>Citrus</taxon>
    </lineage>
</organism>
<proteinExistence type="inferred from homology"/>
<feature type="chain" id="PRO_0000360924" description="NAD(P)H-quinone oxidoreductase subunit 5, chloroplastic">
    <location>
        <begin position="1"/>
        <end position="743"/>
    </location>
</feature>
<feature type="transmembrane region" description="Helical" evidence="2">
    <location>
        <begin position="9"/>
        <end position="29"/>
    </location>
</feature>
<feature type="transmembrane region" description="Helical" evidence="2">
    <location>
        <begin position="40"/>
        <end position="60"/>
    </location>
</feature>
<feature type="transmembrane region" description="Helical" evidence="2">
    <location>
        <begin position="89"/>
        <end position="109"/>
    </location>
</feature>
<feature type="transmembrane region" description="Helical" evidence="2">
    <location>
        <begin position="125"/>
        <end position="145"/>
    </location>
</feature>
<feature type="transmembrane region" description="Helical" evidence="2">
    <location>
        <begin position="147"/>
        <end position="167"/>
    </location>
</feature>
<feature type="transmembrane region" description="Helical" evidence="2">
    <location>
        <begin position="185"/>
        <end position="205"/>
    </location>
</feature>
<feature type="transmembrane region" description="Helical" evidence="2">
    <location>
        <begin position="219"/>
        <end position="239"/>
    </location>
</feature>
<feature type="transmembrane region" description="Helical" evidence="2">
    <location>
        <begin position="258"/>
        <end position="278"/>
    </location>
</feature>
<feature type="transmembrane region" description="Helical" evidence="2">
    <location>
        <begin position="280"/>
        <end position="300"/>
    </location>
</feature>
<feature type="transmembrane region" description="Helical" evidence="2">
    <location>
        <begin position="327"/>
        <end position="347"/>
    </location>
</feature>
<feature type="transmembrane region" description="Helical" evidence="2">
    <location>
        <begin position="354"/>
        <end position="374"/>
    </location>
</feature>
<feature type="transmembrane region" description="Helical" evidence="2">
    <location>
        <begin position="396"/>
        <end position="416"/>
    </location>
</feature>
<feature type="transmembrane region" description="Helical" evidence="2">
    <location>
        <begin position="425"/>
        <end position="445"/>
    </location>
</feature>
<feature type="transmembrane region" description="Helical" evidence="2">
    <location>
        <begin position="546"/>
        <end position="566"/>
    </location>
</feature>
<feature type="transmembrane region" description="Helical" evidence="2">
    <location>
        <begin position="607"/>
        <end position="627"/>
    </location>
</feature>
<feature type="transmembrane region" description="Helical" evidence="2">
    <location>
        <begin position="721"/>
        <end position="741"/>
    </location>
</feature>
<evidence type="ECO:0000250" key="1"/>
<evidence type="ECO:0000255" key="2"/>
<evidence type="ECO:0000305" key="3"/>